<accession>Q2GJE2</accession>
<reference key="1">
    <citation type="journal article" date="2006" name="PLoS Genet.">
        <title>Comparative genomics of emerging human ehrlichiosis agents.</title>
        <authorList>
            <person name="Dunning Hotopp J.C."/>
            <person name="Lin M."/>
            <person name="Madupu R."/>
            <person name="Crabtree J."/>
            <person name="Angiuoli S.V."/>
            <person name="Eisen J.A."/>
            <person name="Seshadri R."/>
            <person name="Ren Q."/>
            <person name="Wu M."/>
            <person name="Utterback T.R."/>
            <person name="Smith S."/>
            <person name="Lewis M."/>
            <person name="Khouri H."/>
            <person name="Zhang C."/>
            <person name="Niu H."/>
            <person name="Lin Q."/>
            <person name="Ohashi N."/>
            <person name="Zhi N."/>
            <person name="Nelson W.C."/>
            <person name="Brinkac L.M."/>
            <person name="Dodson R.J."/>
            <person name="Rosovitz M.J."/>
            <person name="Sundaram J.P."/>
            <person name="Daugherty S.C."/>
            <person name="Davidsen T."/>
            <person name="Durkin A.S."/>
            <person name="Gwinn M.L."/>
            <person name="Haft D.H."/>
            <person name="Selengut J.D."/>
            <person name="Sullivan S.A."/>
            <person name="Zafar N."/>
            <person name="Zhou L."/>
            <person name="Benahmed F."/>
            <person name="Forberger H."/>
            <person name="Halpin R."/>
            <person name="Mulligan S."/>
            <person name="Robinson J."/>
            <person name="White O."/>
            <person name="Rikihisa Y."/>
            <person name="Tettelin H."/>
        </authorList>
    </citation>
    <scope>NUCLEOTIDE SEQUENCE [LARGE SCALE GENOMIC DNA]</scope>
    <source>
        <strain>HZ</strain>
    </source>
</reference>
<dbReference type="EMBL" id="CP000235">
    <property type="protein sequence ID" value="ABD44248.1"/>
    <property type="molecule type" value="Genomic_DNA"/>
</dbReference>
<dbReference type="RefSeq" id="WP_011451022.1">
    <property type="nucleotide sequence ID" value="NC_007797.1"/>
</dbReference>
<dbReference type="SMR" id="Q2GJE2"/>
<dbReference type="STRING" id="212042.APH_0939"/>
<dbReference type="PaxDb" id="212042-APH_0939"/>
<dbReference type="EnsemblBacteria" id="ABD44248">
    <property type="protein sequence ID" value="ABD44248"/>
    <property type="gene ID" value="APH_0939"/>
</dbReference>
<dbReference type="KEGG" id="aph:APH_0939"/>
<dbReference type="PATRIC" id="fig|212042.8.peg.1005"/>
<dbReference type="eggNOG" id="COG0323">
    <property type="taxonomic scope" value="Bacteria"/>
</dbReference>
<dbReference type="HOGENOM" id="CLU_004131_4_2_5"/>
<dbReference type="Proteomes" id="UP000001943">
    <property type="component" value="Chromosome"/>
</dbReference>
<dbReference type="GO" id="GO:0032300">
    <property type="term" value="C:mismatch repair complex"/>
    <property type="evidence" value="ECO:0007669"/>
    <property type="project" value="InterPro"/>
</dbReference>
<dbReference type="GO" id="GO:0005524">
    <property type="term" value="F:ATP binding"/>
    <property type="evidence" value="ECO:0007669"/>
    <property type="project" value="InterPro"/>
</dbReference>
<dbReference type="GO" id="GO:0016887">
    <property type="term" value="F:ATP hydrolysis activity"/>
    <property type="evidence" value="ECO:0007669"/>
    <property type="project" value="InterPro"/>
</dbReference>
<dbReference type="GO" id="GO:0140664">
    <property type="term" value="F:ATP-dependent DNA damage sensor activity"/>
    <property type="evidence" value="ECO:0007669"/>
    <property type="project" value="InterPro"/>
</dbReference>
<dbReference type="GO" id="GO:0030983">
    <property type="term" value="F:mismatched DNA binding"/>
    <property type="evidence" value="ECO:0007669"/>
    <property type="project" value="InterPro"/>
</dbReference>
<dbReference type="GO" id="GO:0006298">
    <property type="term" value="P:mismatch repair"/>
    <property type="evidence" value="ECO:0007669"/>
    <property type="project" value="UniProtKB-UniRule"/>
</dbReference>
<dbReference type="CDD" id="cd16926">
    <property type="entry name" value="HATPase_MutL-MLH-PMS-like"/>
    <property type="match status" value="1"/>
</dbReference>
<dbReference type="CDD" id="cd00782">
    <property type="entry name" value="MutL_Trans"/>
    <property type="match status" value="1"/>
</dbReference>
<dbReference type="FunFam" id="3.30.565.10:FF:000003">
    <property type="entry name" value="DNA mismatch repair endonuclease MutL"/>
    <property type="match status" value="1"/>
</dbReference>
<dbReference type="Gene3D" id="3.30.230.10">
    <property type="match status" value="1"/>
</dbReference>
<dbReference type="Gene3D" id="3.30.565.10">
    <property type="entry name" value="Histidine kinase-like ATPase, C-terminal domain"/>
    <property type="match status" value="1"/>
</dbReference>
<dbReference type="Gene3D" id="3.30.1540.20">
    <property type="entry name" value="MutL, C-terminal domain, dimerisation subdomain"/>
    <property type="match status" value="1"/>
</dbReference>
<dbReference type="Gene3D" id="3.30.1370.100">
    <property type="entry name" value="MutL, C-terminal domain, regulatory subdomain"/>
    <property type="match status" value="1"/>
</dbReference>
<dbReference type="HAMAP" id="MF_00149">
    <property type="entry name" value="DNA_mis_repair"/>
    <property type="match status" value="1"/>
</dbReference>
<dbReference type="InterPro" id="IPR014762">
    <property type="entry name" value="DNA_mismatch_repair_CS"/>
</dbReference>
<dbReference type="InterPro" id="IPR020667">
    <property type="entry name" value="DNA_mismatch_repair_MutL"/>
</dbReference>
<dbReference type="InterPro" id="IPR013507">
    <property type="entry name" value="DNA_mismatch_S5_2-like"/>
</dbReference>
<dbReference type="InterPro" id="IPR036890">
    <property type="entry name" value="HATPase_C_sf"/>
</dbReference>
<dbReference type="InterPro" id="IPR002099">
    <property type="entry name" value="MutL/Mlh/PMS"/>
</dbReference>
<dbReference type="InterPro" id="IPR038973">
    <property type="entry name" value="MutL/Mlh/Pms-like"/>
</dbReference>
<dbReference type="InterPro" id="IPR014790">
    <property type="entry name" value="MutL_C"/>
</dbReference>
<dbReference type="InterPro" id="IPR042120">
    <property type="entry name" value="MutL_C_dimsub"/>
</dbReference>
<dbReference type="InterPro" id="IPR042121">
    <property type="entry name" value="MutL_C_regsub"/>
</dbReference>
<dbReference type="InterPro" id="IPR037198">
    <property type="entry name" value="MutL_C_sf"/>
</dbReference>
<dbReference type="InterPro" id="IPR020568">
    <property type="entry name" value="Ribosomal_Su5_D2-typ_SF"/>
</dbReference>
<dbReference type="InterPro" id="IPR014721">
    <property type="entry name" value="Ribsml_uS5_D2-typ_fold_subgr"/>
</dbReference>
<dbReference type="NCBIfam" id="TIGR00585">
    <property type="entry name" value="mutl"/>
    <property type="match status" value="1"/>
</dbReference>
<dbReference type="PANTHER" id="PTHR10073">
    <property type="entry name" value="DNA MISMATCH REPAIR PROTEIN MLH, PMS, MUTL"/>
    <property type="match status" value="1"/>
</dbReference>
<dbReference type="PANTHER" id="PTHR10073:SF12">
    <property type="entry name" value="DNA MISMATCH REPAIR PROTEIN MLH1"/>
    <property type="match status" value="1"/>
</dbReference>
<dbReference type="Pfam" id="PF01119">
    <property type="entry name" value="DNA_mis_repair"/>
    <property type="match status" value="1"/>
</dbReference>
<dbReference type="Pfam" id="PF13589">
    <property type="entry name" value="HATPase_c_3"/>
    <property type="match status" value="1"/>
</dbReference>
<dbReference type="Pfam" id="PF08676">
    <property type="entry name" value="MutL_C"/>
    <property type="match status" value="1"/>
</dbReference>
<dbReference type="SMART" id="SM01340">
    <property type="entry name" value="DNA_mis_repair"/>
    <property type="match status" value="1"/>
</dbReference>
<dbReference type="SMART" id="SM00853">
    <property type="entry name" value="MutL_C"/>
    <property type="match status" value="1"/>
</dbReference>
<dbReference type="SUPFAM" id="SSF55874">
    <property type="entry name" value="ATPase domain of HSP90 chaperone/DNA topoisomerase II/histidine kinase"/>
    <property type="match status" value="1"/>
</dbReference>
<dbReference type="SUPFAM" id="SSF118116">
    <property type="entry name" value="DNA mismatch repair protein MutL"/>
    <property type="match status" value="1"/>
</dbReference>
<dbReference type="SUPFAM" id="SSF54211">
    <property type="entry name" value="Ribosomal protein S5 domain 2-like"/>
    <property type="match status" value="1"/>
</dbReference>
<dbReference type="PROSITE" id="PS00058">
    <property type="entry name" value="DNA_MISMATCH_REPAIR_1"/>
    <property type="match status" value="1"/>
</dbReference>
<protein>
    <recommendedName>
        <fullName evidence="1">DNA mismatch repair protein MutL</fullName>
    </recommendedName>
</protein>
<proteinExistence type="inferred from homology"/>
<sequence>MPIVVLSAQTINKIAAGEVIDCPASVVKELVENSIDAGAKTINVHVDKGGRNLISVSDDGCGIACEEMEKAFIGHATSKLIDGDLANVKTMGFRGEGLTAVASVARVKMVSKHVDAERAWSITFEGGEKTRDLTPGVLSCGTHVEVRDLFFATPTRLKFLRTEKAEMQNIVDLLNRLAMINYTIAFSLTIVERQIFKYSAQESLIERLKEMRAFGEVFCEQSLEINHSIDHVRVYGHIGLPTFNKSKPGMVHTFVNGRPIYSTLLLGAVKSAYHGLIPKDRHPVVVLALDVMPAYVDVNVHPSKMEVRFQDKRLVYKAVLDALGEALSSNVYARFSPAATTSEGHDHFAMDSIEKTYGKFFSEDTEAASTMQLQPEVLNHNIPLLFGSSHVDDSKGTHDTRFCADHTHHNDTKGSVHTKSFSARSSSSAESKMEQGCMLEEPPLGYAVCQLFERYIISRAGDYVIIVDQHAAHERLVCEYIKKVTEQEGIKRQVLLMPEFIELGNEYELELLTEYREKLRDLGLIVEPMGDLTVVVREVPAIFGVVDAKALISKILESIMAKGDELFVKGKLSHICGTVACYSSIRSGRIMKLEEMNSLLRHMESTPHSGQCNHGRPTYVKLKLSEIDKLFERT</sequence>
<feature type="chain" id="PRO_1000009974" description="DNA mismatch repair protein MutL">
    <location>
        <begin position="1"/>
        <end position="634"/>
    </location>
</feature>
<feature type="region of interest" description="Disordered" evidence="2">
    <location>
        <begin position="406"/>
        <end position="427"/>
    </location>
</feature>
<name>MUTL_ANAPZ</name>
<gene>
    <name evidence="1" type="primary">mutL</name>
    <name type="ordered locus">APH_0939</name>
</gene>
<evidence type="ECO:0000255" key="1">
    <source>
        <dbReference type="HAMAP-Rule" id="MF_00149"/>
    </source>
</evidence>
<evidence type="ECO:0000256" key="2">
    <source>
        <dbReference type="SAM" id="MobiDB-lite"/>
    </source>
</evidence>
<comment type="function">
    <text evidence="1">This protein is involved in the repair of mismatches in DNA. It is required for dam-dependent methyl-directed DNA mismatch repair. May act as a 'molecular matchmaker', a protein that promotes the formation of a stable complex between two or more DNA-binding proteins in an ATP-dependent manner without itself being part of a final effector complex.</text>
</comment>
<comment type="similarity">
    <text evidence="1">Belongs to the DNA mismatch repair MutL/HexB family.</text>
</comment>
<keyword id="KW-0227">DNA damage</keyword>
<keyword id="KW-0234">DNA repair</keyword>
<organism>
    <name type="scientific">Anaplasma phagocytophilum (strain HZ)</name>
    <dbReference type="NCBI Taxonomy" id="212042"/>
    <lineage>
        <taxon>Bacteria</taxon>
        <taxon>Pseudomonadati</taxon>
        <taxon>Pseudomonadota</taxon>
        <taxon>Alphaproteobacteria</taxon>
        <taxon>Rickettsiales</taxon>
        <taxon>Anaplasmataceae</taxon>
        <taxon>Anaplasma</taxon>
        <taxon>phagocytophilum group</taxon>
    </lineage>
</organism>